<feature type="chain" id="PRO_0000295021" description="Fructose-1,6-bisphosphatase, cytosolic">
    <location>
        <begin position="1"/>
        <end position="339"/>
    </location>
</feature>
<feature type="binding site" evidence="1">
    <location>
        <position position="71"/>
    </location>
    <ligand>
        <name>Mg(2+)</name>
        <dbReference type="ChEBI" id="CHEBI:18420"/>
        <label>1</label>
    </ligand>
</feature>
<feature type="binding site" evidence="1">
    <location>
        <position position="100"/>
    </location>
    <ligand>
        <name>Mg(2+)</name>
        <dbReference type="ChEBI" id="CHEBI:18420"/>
        <label>1</label>
    </ligand>
</feature>
<feature type="binding site" evidence="1">
    <location>
        <position position="100"/>
    </location>
    <ligand>
        <name>Mg(2+)</name>
        <dbReference type="ChEBI" id="CHEBI:18420"/>
        <label>2</label>
    </ligand>
</feature>
<feature type="binding site" evidence="1">
    <location>
        <position position="121"/>
    </location>
    <ligand>
        <name>Mg(2+)</name>
        <dbReference type="ChEBI" id="CHEBI:18420"/>
        <label>2</label>
    </ligand>
</feature>
<feature type="binding site" evidence="1">
    <location>
        <position position="121"/>
    </location>
    <ligand>
        <name>Mg(2+)</name>
        <dbReference type="ChEBI" id="CHEBI:18420"/>
        <label>3</label>
    </ligand>
</feature>
<feature type="binding site" evidence="1">
    <location>
        <position position="123"/>
    </location>
    <ligand>
        <name>Mg(2+)</name>
        <dbReference type="ChEBI" id="CHEBI:18420"/>
        <label>2</label>
    </ligand>
</feature>
<feature type="binding site" evidence="1">
    <location>
        <begin position="124"/>
        <end position="127"/>
    </location>
    <ligand>
        <name>substrate</name>
    </ligand>
</feature>
<feature type="binding site" evidence="1">
    <location>
        <position position="124"/>
    </location>
    <ligand>
        <name>Mg(2+)</name>
        <dbReference type="ChEBI" id="CHEBI:18420"/>
        <label>3</label>
    </ligand>
</feature>
<feature type="binding site" evidence="1">
    <location>
        <position position="215"/>
    </location>
    <ligand>
        <name>substrate</name>
    </ligand>
</feature>
<feature type="binding site" evidence="1">
    <location>
        <position position="247"/>
    </location>
    <ligand>
        <name>substrate</name>
    </ligand>
</feature>
<feature type="binding site" evidence="1">
    <location>
        <position position="267"/>
    </location>
    <ligand>
        <name>substrate</name>
    </ligand>
</feature>
<feature type="binding site" evidence="1">
    <location>
        <position position="277"/>
    </location>
    <ligand>
        <name>substrate</name>
    </ligand>
</feature>
<feature type="binding site" evidence="1">
    <location>
        <position position="283"/>
    </location>
    <ligand>
        <name>Mg(2+)</name>
        <dbReference type="ChEBI" id="CHEBI:18420"/>
        <label>3</label>
    </ligand>
</feature>
<evidence type="ECO:0000250" key="1"/>
<evidence type="ECO:0000305" key="2"/>
<proteinExistence type="evidence at transcript level"/>
<gene>
    <name type="ORF">OsI_04558</name>
</gene>
<accession>A2WXB2</accession>
<accession>B8A6X6</accession>
<accession>O64421</accession>
<accession>Q5N9E2</accession>
<accession>Q94JN1</accession>
<dbReference type="EC" id="3.1.3.11"/>
<dbReference type="EMBL" id="CM000126">
    <property type="protein sequence ID" value="EEC71858.1"/>
    <property type="molecule type" value="Genomic_DNA"/>
</dbReference>
<dbReference type="EMBL" id="AF378183">
    <property type="protein sequence ID" value="AAK54854.1"/>
    <property type="molecule type" value="mRNA"/>
</dbReference>
<dbReference type="SMR" id="A2WXB2"/>
<dbReference type="STRING" id="39946.A2WXB2"/>
<dbReference type="EnsemblPlants" id="BGIOSGA004865-TA">
    <property type="protein sequence ID" value="BGIOSGA004865-PA"/>
    <property type="gene ID" value="BGIOSGA004865"/>
</dbReference>
<dbReference type="EnsemblPlants" id="OsGoSa_01g0040680.01">
    <property type="protein sequence ID" value="OsGoSa_01g0040680.01"/>
    <property type="gene ID" value="OsGoSa_01g0040680"/>
</dbReference>
<dbReference type="EnsemblPlants" id="OsIR64_01g0040120.02">
    <property type="protein sequence ID" value="OsIR64_01g0040120.02"/>
    <property type="gene ID" value="OsIR64_01g0040120"/>
</dbReference>
<dbReference type="EnsemblPlants" id="OsKYG_01g0040430.03">
    <property type="protein sequence ID" value="OsKYG_01g0040430.03"/>
    <property type="gene ID" value="OsKYG_01g0040430"/>
</dbReference>
<dbReference type="EnsemblPlants" id="OsLaMu_01g0040490.02">
    <property type="protein sequence ID" value="OsLaMu_01g0040490.02"/>
    <property type="gene ID" value="OsLaMu_01g0040490"/>
</dbReference>
<dbReference type="EnsemblPlants" id="OsLima_01g0040460.01">
    <property type="protein sequence ID" value="OsLima_01g0040460.01"/>
    <property type="gene ID" value="OsLima_01g0040460"/>
</dbReference>
<dbReference type="EnsemblPlants" id="OsLiXu_01g0040630.03">
    <property type="protein sequence ID" value="OsLiXu_01g0040630.03"/>
    <property type="gene ID" value="OsLiXu_01g0040630"/>
</dbReference>
<dbReference type="EnsemblPlants" id="OsMH63_01G041300_02">
    <property type="protein sequence ID" value="OsMH63_01G041300_02"/>
    <property type="gene ID" value="OsMH63_01G041300"/>
</dbReference>
<dbReference type="EnsemblPlants" id="OsPr106_01g0040450.03">
    <property type="protein sequence ID" value="OsPr106_01g0040450.03"/>
    <property type="gene ID" value="OsPr106_01g0040450"/>
</dbReference>
<dbReference type="EnsemblPlants" id="OsZS97_01G040640_01">
    <property type="protein sequence ID" value="OsZS97_01G040640_01"/>
    <property type="gene ID" value="OsZS97_01G040640"/>
</dbReference>
<dbReference type="Gramene" id="BGIOSGA004865-TA">
    <property type="protein sequence ID" value="BGIOSGA004865-PA"/>
    <property type="gene ID" value="BGIOSGA004865"/>
</dbReference>
<dbReference type="Gramene" id="OsGoSa_01g0040680.01">
    <property type="protein sequence ID" value="OsGoSa_01g0040680.01"/>
    <property type="gene ID" value="OsGoSa_01g0040680"/>
</dbReference>
<dbReference type="Gramene" id="OsIR64_01g0040120.02">
    <property type="protein sequence ID" value="OsIR64_01g0040120.02"/>
    <property type="gene ID" value="OsIR64_01g0040120"/>
</dbReference>
<dbReference type="Gramene" id="OsKYG_01g0040430.03">
    <property type="protein sequence ID" value="OsKYG_01g0040430.03"/>
    <property type="gene ID" value="OsKYG_01g0040430"/>
</dbReference>
<dbReference type="Gramene" id="OsLaMu_01g0040490.02">
    <property type="protein sequence ID" value="OsLaMu_01g0040490.02"/>
    <property type="gene ID" value="OsLaMu_01g0040490"/>
</dbReference>
<dbReference type="Gramene" id="OsLima_01g0040460.01">
    <property type="protein sequence ID" value="OsLima_01g0040460.01"/>
    <property type="gene ID" value="OsLima_01g0040460"/>
</dbReference>
<dbReference type="Gramene" id="OsLiXu_01g0040630.03">
    <property type="protein sequence ID" value="OsLiXu_01g0040630.03"/>
    <property type="gene ID" value="OsLiXu_01g0040630"/>
</dbReference>
<dbReference type="Gramene" id="OsMH63_01G041300_02">
    <property type="protein sequence ID" value="OsMH63_01G041300_02"/>
    <property type="gene ID" value="OsMH63_01G041300"/>
</dbReference>
<dbReference type="Gramene" id="OsPr106_01g0040450.03">
    <property type="protein sequence ID" value="OsPr106_01g0040450.03"/>
    <property type="gene ID" value="OsPr106_01g0040450"/>
</dbReference>
<dbReference type="Gramene" id="OsZS97_01G040640_01">
    <property type="protein sequence ID" value="OsZS97_01G040640_01"/>
    <property type="gene ID" value="OsZS97_01G040640"/>
</dbReference>
<dbReference type="HOGENOM" id="CLU_039977_1_0_1"/>
<dbReference type="OMA" id="YIPENCP"/>
<dbReference type="OrthoDB" id="10256725at2759"/>
<dbReference type="Proteomes" id="UP000007015">
    <property type="component" value="Chromosome 1"/>
</dbReference>
<dbReference type="GO" id="GO:0005829">
    <property type="term" value="C:cytosol"/>
    <property type="evidence" value="ECO:0007669"/>
    <property type="project" value="TreeGrafter"/>
</dbReference>
<dbReference type="GO" id="GO:0042132">
    <property type="term" value="F:fructose 1,6-bisphosphate 1-phosphatase activity"/>
    <property type="evidence" value="ECO:0007669"/>
    <property type="project" value="UniProtKB-EC"/>
</dbReference>
<dbReference type="GO" id="GO:0046872">
    <property type="term" value="F:metal ion binding"/>
    <property type="evidence" value="ECO:0007669"/>
    <property type="project" value="UniProtKB-KW"/>
</dbReference>
<dbReference type="GO" id="GO:0030388">
    <property type="term" value="P:fructose 1,6-bisphosphate metabolic process"/>
    <property type="evidence" value="ECO:0007669"/>
    <property type="project" value="TreeGrafter"/>
</dbReference>
<dbReference type="GO" id="GO:0006002">
    <property type="term" value="P:fructose 6-phosphate metabolic process"/>
    <property type="evidence" value="ECO:0007669"/>
    <property type="project" value="TreeGrafter"/>
</dbReference>
<dbReference type="GO" id="GO:0006000">
    <property type="term" value="P:fructose metabolic process"/>
    <property type="evidence" value="ECO:0007669"/>
    <property type="project" value="TreeGrafter"/>
</dbReference>
<dbReference type="GO" id="GO:0006094">
    <property type="term" value="P:gluconeogenesis"/>
    <property type="evidence" value="ECO:0007669"/>
    <property type="project" value="TreeGrafter"/>
</dbReference>
<dbReference type="GO" id="GO:0005986">
    <property type="term" value="P:sucrose biosynthetic process"/>
    <property type="evidence" value="ECO:0007669"/>
    <property type="project" value="TreeGrafter"/>
</dbReference>
<dbReference type="CDD" id="cd00354">
    <property type="entry name" value="FBPase"/>
    <property type="match status" value="1"/>
</dbReference>
<dbReference type="FunFam" id="3.40.190.80:FF:000001">
    <property type="entry name" value="Fructose-1,6-bisphosphatase class 1"/>
    <property type="match status" value="1"/>
</dbReference>
<dbReference type="FunFam" id="3.30.540.10:FF:000008">
    <property type="entry name" value="Fructose-1,6-bisphosphatase, cytosolic"/>
    <property type="match status" value="1"/>
</dbReference>
<dbReference type="Gene3D" id="3.40.190.80">
    <property type="match status" value="1"/>
</dbReference>
<dbReference type="Gene3D" id="3.30.540.10">
    <property type="entry name" value="Fructose-1,6-Bisphosphatase, subunit A, domain 1"/>
    <property type="match status" value="1"/>
</dbReference>
<dbReference type="HAMAP" id="MF_01855">
    <property type="entry name" value="FBPase_class1"/>
    <property type="match status" value="1"/>
</dbReference>
<dbReference type="InterPro" id="IPR044015">
    <property type="entry name" value="FBPase_C_dom"/>
</dbReference>
<dbReference type="InterPro" id="IPR000146">
    <property type="entry name" value="FBPase_class-1"/>
</dbReference>
<dbReference type="InterPro" id="IPR033391">
    <property type="entry name" value="FBPase_N"/>
</dbReference>
<dbReference type="InterPro" id="IPR028343">
    <property type="entry name" value="FBPtase"/>
</dbReference>
<dbReference type="InterPro" id="IPR020548">
    <property type="entry name" value="Fructose_bisphosphatase_AS"/>
</dbReference>
<dbReference type="NCBIfam" id="NF006778">
    <property type="entry name" value="PRK09293.1-1"/>
    <property type="match status" value="1"/>
</dbReference>
<dbReference type="NCBIfam" id="NF006779">
    <property type="entry name" value="PRK09293.1-3"/>
    <property type="match status" value="1"/>
</dbReference>
<dbReference type="PANTHER" id="PTHR11556:SF41">
    <property type="entry name" value="FRUCTOSE-1,6-BISPHOSPHATASE, CYTOSOLIC"/>
    <property type="match status" value="1"/>
</dbReference>
<dbReference type="PANTHER" id="PTHR11556">
    <property type="entry name" value="FRUCTOSE-1,6-BISPHOSPHATASE-RELATED"/>
    <property type="match status" value="1"/>
</dbReference>
<dbReference type="Pfam" id="PF00316">
    <property type="entry name" value="FBPase"/>
    <property type="match status" value="1"/>
</dbReference>
<dbReference type="Pfam" id="PF18913">
    <property type="entry name" value="FBPase_C"/>
    <property type="match status" value="1"/>
</dbReference>
<dbReference type="PIRSF" id="PIRSF500210">
    <property type="entry name" value="FBPtase"/>
    <property type="match status" value="1"/>
</dbReference>
<dbReference type="PIRSF" id="PIRSF000904">
    <property type="entry name" value="FBPtase_SBPase"/>
    <property type="match status" value="1"/>
</dbReference>
<dbReference type="PRINTS" id="PR00115">
    <property type="entry name" value="F16BPHPHTASE"/>
</dbReference>
<dbReference type="SUPFAM" id="SSF56655">
    <property type="entry name" value="Carbohydrate phosphatase"/>
    <property type="match status" value="1"/>
</dbReference>
<dbReference type="PROSITE" id="PS00124">
    <property type="entry name" value="FBPASE"/>
    <property type="match status" value="1"/>
</dbReference>
<name>F16P2_ORYSI</name>
<organism>
    <name type="scientific">Oryza sativa subsp. indica</name>
    <name type="common">Rice</name>
    <dbReference type="NCBI Taxonomy" id="39946"/>
    <lineage>
        <taxon>Eukaryota</taxon>
        <taxon>Viridiplantae</taxon>
        <taxon>Streptophyta</taxon>
        <taxon>Embryophyta</taxon>
        <taxon>Tracheophyta</taxon>
        <taxon>Spermatophyta</taxon>
        <taxon>Magnoliopsida</taxon>
        <taxon>Liliopsida</taxon>
        <taxon>Poales</taxon>
        <taxon>Poaceae</taxon>
        <taxon>BOP clade</taxon>
        <taxon>Oryzoideae</taxon>
        <taxon>Oryzeae</taxon>
        <taxon>Oryzinae</taxon>
        <taxon>Oryza</taxon>
        <taxon>Oryza sativa</taxon>
    </lineage>
</organism>
<reference key="1">
    <citation type="journal article" date="2005" name="PLoS Biol.">
        <title>The genomes of Oryza sativa: a history of duplications.</title>
        <authorList>
            <person name="Yu J."/>
            <person name="Wang J."/>
            <person name="Lin W."/>
            <person name="Li S."/>
            <person name="Li H."/>
            <person name="Zhou J."/>
            <person name="Ni P."/>
            <person name="Dong W."/>
            <person name="Hu S."/>
            <person name="Zeng C."/>
            <person name="Zhang J."/>
            <person name="Zhang Y."/>
            <person name="Li R."/>
            <person name="Xu Z."/>
            <person name="Li S."/>
            <person name="Li X."/>
            <person name="Zheng H."/>
            <person name="Cong L."/>
            <person name="Lin L."/>
            <person name="Yin J."/>
            <person name="Geng J."/>
            <person name="Li G."/>
            <person name="Shi J."/>
            <person name="Liu J."/>
            <person name="Lv H."/>
            <person name="Li J."/>
            <person name="Wang J."/>
            <person name="Deng Y."/>
            <person name="Ran L."/>
            <person name="Shi X."/>
            <person name="Wang X."/>
            <person name="Wu Q."/>
            <person name="Li C."/>
            <person name="Ren X."/>
            <person name="Wang J."/>
            <person name="Wang X."/>
            <person name="Li D."/>
            <person name="Liu D."/>
            <person name="Zhang X."/>
            <person name="Ji Z."/>
            <person name="Zhao W."/>
            <person name="Sun Y."/>
            <person name="Zhang Z."/>
            <person name="Bao J."/>
            <person name="Han Y."/>
            <person name="Dong L."/>
            <person name="Ji J."/>
            <person name="Chen P."/>
            <person name="Wu S."/>
            <person name="Liu J."/>
            <person name="Xiao Y."/>
            <person name="Bu D."/>
            <person name="Tan J."/>
            <person name="Yang L."/>
            <person name="Ye C."/>
            <person name="Zhang J."/>
            <person name="Xu J."/>
            <person name="Zhou Y."/>
            <person name="Yu Y."/>
            <person name="Zhang B."/>
            <person name="Zhuang S."/>
            <person name="Wei H."/>
            <person name="Liu B."/>
            <person name="Lei M."/>
            <person name="Yu H."/>
            <person name="Li Y."/>
            <person name="Xu H."/>
            <person name="Wei S."/>
            <person name="He X."/>
            <person name="Fang L."/>
            <person name="Zhang Z."/>
            <person name="Zhang Y."/>
            <person name="Huang X."/>
            <person name="Su Z."/>
            <person name="Tong W."/>
            <person name="Li J."/>
            <person name="Tong Z."/>
            <person name="Li S."/>
            <person name="Ye J."/>
            <person name="Wang L."/>
            <person name="Fang L."/>
            <person name="Lei T."/>
            <person name="Chen C.-S."/>
            <person name="Chen H.-C."/>
            <person name="Xu Z."/>
            <person name="Li H."/>
            <person name="Huang H."/>
            <person name="Zhang F."/>
            <person name="Xu H."/>
            <person name="Li N."/>
            <person name="Zhao C."/>
            <person name="Li S."/>
            <person name="Dong L."/>
            <person name="Huang Y."/>
            <person name="Li L."/>
            <person name="Xi Y."/>
            <person name="Qi Q."/>
            <person name="Li W."/>
            <person name="Zhang B."/>
            <person name="Hu W."/>
            <person name="Zhang Y."/>
            <person name="Tian X."/>
            <person name="Jiao Y."/>
            <person name="Liang X."/>
            <person name="Jin J."/>
            <person name="Gao L."/>
            <person name="Zheng W."/>
            <person name="Hao B."/>
            <person name="Liu S.-M."/>
            <person name="Wang W."/>
            <person name="Yuan L."/>
            <person name="Cao M."/>
            <person name="McDermott J."/>
            <person name="Samudrala R."/>
            <person name="Wang J."/>
            <person name="Wong G.K.-S."/>
            <person name="Yang H."/>
        </authorList>
    </citation>
    <scope>NUCLEOTIDE SEQUENCE [LARGE SCALE GENOMIC DNA]</scope>
    <source>
        <strain>cv. 93-11</strain>
    </source>
</reference>
<reference key="2">
    <citation type="submission" date="2001-05" db="EMBL/GenBank/DDBJ databases">
        <title>Expression and regulation of genes involved in carbohydrate metabolism in rice.</title>
        <authorList>
            <person name="Lee D.-S."/>
            <person name="Hur Y."/>
        </authorList>
    </citation>
    <scope>NUCLEOTIDE SEQUENCE [MRNA] OF 126-293</scope>
    <source>
        <strain>cv. Milyang 23</strain>
    </source>
</reference>
<sequence length="339" mass="37035">MDHEADAYRTDLMTITRYVLNEQSRNPEARGDLTILLSHIVLGCKFVASAVNKAGLAKLIGLAGETNVQGEEQKKLDVLSNEVFVKALVSSGRTCVLVSEEDEEATFVDPALRGKYCVCFDPLDGSSNIDCGVSIGTIFGIYMIKDKENVTLEDVLQPGKNMVAAGYCMYGSSCTLVLSTGNGVNGFTLDPSLGEFILTHPDIKIPKKGKIYSVNEGNAKNWDEPTAKFVEKCKFPKDGSSPKSLRYIGSMVADVHRTLLYGGVFLYPADKKSPNGKLRVLYEVFPMSFLMEQAGGQSFTGKERALDLVPTKIHERSPIFLGSFEDVEEIKGLYAAQAK</sequence>
<protein>
    <recommendedName>
        <fullName>Fructose-1,6-bisphosphatase, cytosolic</fullName>
        <shortName>FBPase</shortName>
        <ecNumber>3.1.3.11</ecNumber>
    </recommendedName>
    <alternativeName>
        <fullName>D-fructose-1,6-bisphosphate 1-phosphohydrolase</fullName>
    </alternativeName>
</protein>
<comment type="catalytic activity">
    <reaction>
        <text>beta-D-fructose 1,6-bisphosphate + H2O = beta-D-fructose 6-phosphate + phosphate</text>
        <dbReference type="Rhea" id="RHEA:11064"/>
        <dbReference type="ChEBI" id="CHEBI:15377"/>
        <dbReference type="ChEBI" id="CHEBI:32966"/>
        <dbReference type="ChEBI" id="CHEBI:43474"/>
        <dbReference type="ChEBI" id="CHEBI:57634"/>
        <dbReference type="EC" id="3.1.3.11"/>
    </reaction>
</comment>
<comment type="cofactor">
    <cofactor evidence="1">
        <name>Mg(2+)</name>
        <dbReference type="ChEBI" id="CHEBI:18420"/>
    </cofactor>
    <text evidence="1">Binds 3 Mg(2+) ions per subunit.</text>
</comment>
<comment type="subcellular location">
    <subcellularLocation>
        <location>Cytoplasm</location>
    </subcellularLocation>
</comment>
<comment type="miscellaneous">
    <text>In plants there are two FBPase isozymes: one in the cytosol and the other in the chloroplast.</text>
</comment>
<comment type="similarity">
    <text evidence="2">Belongs to the FBPase class 1 family.</text>
</comment>
<keyword id="KW-0119">Carbohydrate metabolism</keyword>
<keyword id="KW-0963">Cytoplasm</keyword>
<keyword id="KW-0378">Hydrolase</keyword>
<keyword id="KW-0460">Magnesium</keyword>
<keyword id="KW-0479">Metal-binding</keyword>
<keyword id="KW-1185">Reference proteome</keyword>